<organism>
    <name type="scientific">Burkholderia cenocepacia (strain HI2424)</name>
    <dbReference type="NCBI Taxonomy" id="331272"/>
    <lineage>
        <taxon>Bacteria</taxon>
        <taxon>Pseudomonadati</taxon>
        <taxon>Pseudomonadota</taxon>
        <taxon>Betaproteobacteria</taxon>
        <taxon>Burkholderiales</taxon>
        <taxon>Burkholderiaceae</taxon>
        <taxon>Burkholderia</taxon>
        <taxon>Burkholderia cepacia complex</taxon>
    </lineage>
</organism>
<gene>
    <name evidence="1" type="primary">rpsG</name>
    <name type="ordered locus">Bcen2424_0344</name>
</gene>
<proteinExistence type="inferred from homology"/>
<comment type="function">
    <text evidence="1">One of the primary rRNA binding proteins, it binds directly to 16S rRNA where it nucleates assembly of the head domain of the 30S subunit. Is located at the subunit interface close to the decoding center, probably blocks exit of the E-site tRNA.</text>
</comment>
<comment type="subunit">
    <text evidence="1">Part of the 30S ribosomal subunit. Contacts proteins S9 and S11.</text>
</comment>
<comment type="similarity">
    <text evidence="1">Belongs to the universal ribosomal protein uS7 family.</text>
</comment>
<protein>
    <recommendedName>
        <fullName evidence="1">Small ribosomal subunit protein uS7</fullName>
    </recommendedName>
    <alternativeName>
        <fullName evidence="2">30S ribosomal protein S7</fullName>
    </alternativeName>
</protein>
<reference key="1">
    <citation type="submission" date="2006-08" db="EMBL/GenBank/DDBJ databases">
        <title>Complete sequence of chromosome 1 of Burkholderia cenocepacia HI2424.</title>
        <authorList>
            <person name="Copeland A."/>
            <person name="Lucas S."/>
            <person name="Lapidus A."/>
            <person name="Barry K."/>
            <person name="Detter J.C."/>
            <person name="Glavina del Rio T."/>
            <person name="Hammon N."/>
            <person name="Israni S."/>
            <person name="Pitluck S."/>
            <person name="Chain P."/>
            <person name="Malfatti S."/>
            <person name="Shin M."/>
            <person name="Vergez L."/>
            <person name="Schmutz J."/>
            <person name="Larimer F."/>
            <person name="Land M."/>
            <person name="Hauser L."/>
            <person name="Kyrpides N."/>
            <person name="Kim E."/>
            <person name="LiPuma J.J."/>
            <person name="Gonzalez C.F."/>
            <person name="Konstantinidis K."/>
            <person name="Tiedje J.M."/>
            <person name="Richardson P."/>
        </authorList>
    </citation>
    <scope>NUCLEOTIDE SEQUENCE [LARGE SCALE GENOMIC DNA]</scope>
    <source>
        <strain>HI2424</strain>
    </source>
</reference>
<feature type="chain" id="PRO_1000014155" description="Small ribosomal subunit protein uS7">
    <location>
        <begin position="1"/>
        <end position="156"/>
    </location>
</feature>
<sequence length="156" mass="17670">MPRRREVPKREVLPDPKFGNVDVAKFMNMLMLSGKKSVAERIVYGAFEQIQTKGGKDPLEVFTVALNNVKPVVEVKSRRVGGANYQVPVEVRPSRRMALAMRWLREAAKKRSEKSMALRLAGELSEAAEGRGGAMKKRDEVHRMAEANRAFSHFRF</sequence>
<dbReference type="EMBL" id="CP000458">
    <property type="protein sequence ID" value="ABK07098.1"/>
    <property type="molecule type" value="Genomic_DNA"/>
</dbReference>
<dbReference type="RefSeq" id="WP_006477195.1">
    <property type="nucleotide sequence ID" value="NC_008542.1"/>
</dbReference>
<dbReference type="SMR" id="A0K3M1"/>
<dbReference type="GeneID" id="93193455"/>
<dbReference type="KEGG" id="bch:Bcen2424_0344"/>
<dbReference type="HOGENOM" id="CLU_072226_1_1_4"/>
<dbReference type="GO" id="GO:0015935">
    <property type="term" value="C:small ribosomal subunit"/>
    <property type="evidence" value="ECO:0007669"/>
    <property type="project" value="InterPro"/>
</dbReference>
<dbReference type="GO" id="GO:0019843">
    <property type="term" value="F:rRNA binding"/>
    <property type="evidence" value="ECO:0007669"/>
    <property type="project" value="UniProtKB-UniRule"/>
</dbReference>
<dbReference type="GO" id="GO:0003735">
    <property type="term" value="F:structural constituent of ribosome"/>
    <property type="evidence" value="ECO:0007669"/>
    <property type="project" value="InterPro"/>
</dbReference>
<dbReference type="GO" id="GO:0000049">
    <property type="term" value="F:tRNA binding"/>
    <property type="evidence" value="ECO:0007669"/>
    <property type="project" value="UniProtKB-UniRule"/>
</dbReference>
<dbReference type="GO" id="GO:0006412">
    <property type="term" value="P:translation"/>
    <property type="evidence" value="ECO:0007669"/>
    <property type="project" value="UniProtKB-UniRule"/>
</dbReference>
<dbReference type="CDD" id="cd14869">
    <property type="entry name" value="uS7_Bacteria"/>
    <property type="match status" value="1"/>
</dbReference>
<dbReference type="FunFam" id="1.10.455.10:FF:000001">
    <property type="entry name" value="30S ribosomal protein S7"/>
    <property type="match status" value="1"/>
</dbReference>
<dbReference type="Gene3D" id="1.10.455.10">
    <property type="entry name" value="Ribosomal protein S7 domain"/>
    <property type="match status" value="1"/>
</dbReference>
<dbReference type="HAMAP" id="MF_00480_B">
    <property type="entry name" value="Ribosomal_uS7_B"/>
    <property type="match status" value="1"/>
</dbReference>
<dbReference type="InterPro" id="IPR000235">
    <property type="entry name" value="Ribosomal_uS7"/>
</dbReference>
<dbReference type="InterPro" id="IPR005717">
    <property type="entry name" value="Ribosomal_uS7_bac/org-type"/>
</dbReference>
<dbReference type="InterPro" id="IPR020606">
    <property type="entry name" value="Ribosomal_uS7_CS"/>
</dbReference>
<dbReference type="InterPro" id="IPR023798">
    <property type="entry name" value="Ribosomal_uS7_dom"/>
</dbReference>
<dbReference type="InterPro" id="IPR036823">
    <property type="entry name" value="Ribosomal_uS7_dom_sf"/>
</dbReference>
<dbReference type="NCBIfam" id="TIGR01029">
    <property type="entry name" value="rpsG_bact"/>
    <property type="match status" value="1"/>
</dbReference>
<dbReference type="PANTHER" id="PTHR11205">
    <property type="entry name" value="RIBOSOMAL PROTEIN S7"/>
    <property type="match status" value="1"/>
</dbReference>
<dbReference type="Pfam" id="PF00177">
    <property type="entry name" value="Ribosomal_S7"/>
    <property type="match status" value="1"/>
</dbReference>
<dbReference type="PIRSF" id="PIRSF002122">
    <property type="entry name" value="RPS7p_RPS7a_RPS5e_RPS7o"/>
    <property type="match status" value="1"/>
</dbReference>
<dbReference type="SUPFAM" id="SSF47973">
    <property type="entry name" value="Ribosomal protein S7"/>
    <property type="match status" value="1"/>
</dbReference>
<dbReference type="PROSITE" id="PS00052">
    <property type="entry name" value="RIBOSOMAL_S7"/>
    <property type="match status" value="1"/>
</dbReference>
<keyword id="KW-0687">Ribonucleoprotein</keyword>
<keyword id="KW-0689">Ribosomal protein</keyword>
<keyword id="KW-0694">RNA-binding</keyword>
<keyword id="KW-0699">rRNA-binding</keyword>
<keyword id="KW-0820">tRNA-binding</keyword>
<name>RS7_BURCH</name>
<accession>A0K3M1</accession>
<evidence type="ECO:0000255" key="1">
    <source>
        <dbReference type="HAMAP-Rule" id="MF_00480"/>
    </source>
</evidence>
<evidence type="ECO:0000305" key="2"/>